<name>RS1_HAEIN</name>
<comment type="function">
    <text evidence="1">Binds mRNA; thus facilitating recognition of the initiation point. It is needed to translate mRNA with a short Shine-Dalgarno (SD) purine-rich sequence (By similarity).</text>
</comment>
<comment type="similarity">
    <text evidence="3">Belongs to the bacterial ribosomal protein bS1 family.</text>
</comment>
<feature type="chain" id="PRO_0000196037" description="Small ribosomal subunit protein bS1">
    <location>
        <begin position="1"/>
        <end position="549"/>
    </location>
</feature>
<feature type="domain" description="S1 motif 1" evidence="2">
    <location>
        <begin position="21"/>
        <end position="87"/>
    </location>
</feature>
<feature type="domain" description="S1 motif 2" evidence="2">
    <location>
        <begin position="105"/>
        <end position="171"/>
    </location>
</feature>
<feature type="domain" description="S1 motif 3" evidence="2">
    <location>
        <begin position="192"/>
        <end position="260"/>
    </location>
</feature>
<feature type="domain" description="S1 motif 4" evidence="2">
    <location>
        <begin position="277"/>
        <end position="347"/>
    </location>
</feature>
<feature type="domain" description="S1 motif 5" evidence="2">
    <location>
        <begin position="364"/>
        <end position="434"/>
    </location>
</feature>
<feature type="domain" description="S1 motif 6" evidence="2">
    <location>
        <begin position="451"/>
        <end position="512"/>
    </location>
</feature>
<evidence type="ECO:0000250" key="1"/>
<evidence type="ECO:0000255" key="2">
    <source>
        <dbReference type="PROSITE-ProRule" id="PRU00180"/>
    </source>
</evidence>
<evidence type="ECO:0000305" key="3"/>
<gene>
    <name type="primary">rpsA</name>
    <name type="ordered locus">HI_1220</name>
</gene>
<dbReference type="EMBL" id="L42023">
    <property type="protein sequence ID" value="AAC22873.1"/>
    <property type="molecule type" value="Genomic_DNA"/>
</dbReference>
<dbReference type="RefSeq" id="NP_439376.1">
    <property type="nucleotide sequence ID" value="NC_000907.1"/>
</dbReference>
<dbReference type="STRING" id="71421.HI_1220"/>
<dbReference type="EnsemblBacteria" id="AAC22873">
    <property type="protein sequence ID" value="AAC22873"/>
    <property type="gene ID" value="HI_1220"/>
</dbReference>
<dbReference type="KEGG" id="hin:HI_1220"/>
<dbReference type="PATRIC" id="fig|71421.8.peg.1272"/>
<dbReference type="eggNOG" id="COG0539">
    <property type="taxonomic scope" value="Bacteria"/>
</dbReference>
<dbReference type="HOGENOM" id="CLU_015805_2_1_6"/>
<dbReference type="OrthoDB" id="9804077at2"/>
<dbReference type="PhylomeDB" id="Q48082"/>
<dbReference type="BioCyc" id="HINF71421:G1GJ1-1251-MONOMER"/>
<dbReference type="Proteomes" id="UP000000579">
    <property type="component" value="Chromosome"/>
</dbReference>
<dbReference type="GO" id="GO:0022627">
    <property type="term" value="C:cytosolic small ribosomal subunit"/>
    <property type="evidence" value="ECO:0000318"/>
    <property type="project" value="GO_Central"/>
</dbReference>
<dbReference type="GO" id="GO:0003729">
    <property type="term" value="F:mRNA binding"/>
    <property type="evidence" value="ECO:0000318"/>
    <property type="project" value="GO_Central"/>
</dbReference>
<dbReference type="GO" id="GO:0003735">
    <property type="term" value="F:structural constituent of ribosome"/>
    <property type="evidence" value="ECO:0000318"/>
    <property type="project" value="GO_Central"/>
</dbReference>
<dbReference type="GO" id="GO:0006412">
    <property type="term" value="P:translation"/>
    <property type="evidence" value="ECO:0000318"/>
    <property type="project" value="GO_Central"/>
</dbReference>
<dbReference type="CDD" id="cd05687">
    <property type="entry name" value="S1_RPS1_repeat_ec1_hs1"/>
    <property type="match status" value="1"/>
</dbReference>
<dbReference type="CDD" id="cd04465">
    <property type="entry name" value="S1_RPS1_repeat_ec2_hs2"/>
    <property type="match status" value="1"/>
</dbReference>
<dbReference type="CDD" id="cd05688">
    <property type="entry name" value="S1_RPS1_repeat_ec3"/>
    <property type="match status" value="1"/>
</dbReference>
<dbReference type="CDD" id="cd05689">
    <property type="entry name" value="S1_RPS1_repeat_ec4"/>
    <property type="match status" value="1"/>
</dbReference>
<dbReference type="FunFam" id="2.40.50.140:FF:000011">
    <property type="entry name" value="30S ribosomal protein S1"/>
    <property type="match status" value="1"/>
</dbReference>
<dbReference type="FunFam" id="2.40.50.140:FF:000016">
    <property type="entry name" value="30S ribosomal protein S1"/>
    <property type="match status" value="1"/>
</dbReference>
<dbReference type="FunFam" id="2.40.50.140:FF:000017">
    <property type="entry name" value="30S ribosomal protein S1"/>
    <property type="match status" value="1"/>
</dbReference>
<dbReference type="FunFam" id="2.40.50.140:FF:000018">
    <property type="entry name" value="30S ribosomal protein S1"/>
    <property type="match status" value="1"/>
</dbReference>
<dbReference type="FunFam" id="2.40.50.140:FF:000021">
    <property type="entry name" value="30S ribosomal protein S1"/>
    <property type="match status" value="1"/>
</dbReference>
<dbReference type="Gene3D" id="2.40.50.140">
    <property type="entry name" value="Nucleic acid-binding proteins"/>
    <property type="match status" value="6"/>
</dbReference>
<dbReference type="InterPro" id="IPR012340">
    <property type="entry name" value="NA-bd_OB-fold"/>
</dbReference>
<dbReference type="InterPro" id="IPR050437">
    <property type="entry name" value="Ribos_protein_bS1-like"/>
</dbReference>
<dbReference type="InterPro" id="IPR000110">
    <property type="entry name" value="Ribosomal_bS1"/>
</dbReference>
<dbReference type="InterPro" id="IPR035104">
    <property type="entry name" value="Ribosomal_protein_S1-like"/>
</dbReference>
<dbReference type="InterPro" id="IPR003029">
    <property type="entry name" value="S1_domain"/>
</dbReference>
<dbReference type="NCBIfam" id="NF004951">
    <property type="entry name" value="PRK06299.1-1"/>
    <property type="match status" value="1"/>
</dbReference>
<dbReference type="NCBIfam" id="NF004952">
    <property type="entry name" value="PRK06299.1-2"/>
    <property type="match status" value="1"/>
</dbReference>
<dbReference type="NCBIfam" id="NF004954">
    <property type="entry name" value="PRK06299.1-4"/>
    <property type="match status" value="1"/>
</dbReference>
<dbReference type="NCBIfam" id="TIGR00717">
    <property type="entry name" value="rpsA"/>
    <property type="match status" value="1"/>
</dbReference>
<dbReference type="PANTHER" id="PTHR10724">
    <property type="entry name" value="30S RIBOSOMAL PROTEIN S1"/>
    <property type="match status" value="1"/>
</dbReference>
<dbReference type="PANTHER" id="PTHR10724:SF7">
    <property type="entry name" value="SMALL RIBOSOMAL SUBUNIT PROTEIN BS1C"/>
    <property type="match status" value="1"/>
</dbReference>
<dbReference type="Pfam" id="PF00575">
    <property type="entry name" value="S1"/>
    <property type="match status" value="6"/>
</dbReference>
<dbReference type="PIRSF" id="PIRSF002111">
    <property type="entry name" value="RpsA"/>
    <property type="match status" value="1"/>
</dbReference>
<dbReference type="PRINTS" id="PR00681">
    <property type="entry name" value="RIBOSOMALS1"/>
</dbReference>
<dbReference type="SMART" id="SM00316">
    <property type="entry name" value="S1"/>
    <property type="match status" value="6"/>
</dbReference>
<dbReference type="SUPFAM" id="SSF50249">
    <property type="entry name" value="Nucleic acid-binding proteins"/>
    <property type="match status" value="6"/>
</dbReference>
<dbReference type="PROSITE" id="PS50126">
    <property type="entry name" value="S1"/>
    <property type="match status" value="6"/>
</dbReference>
<accession>Q48082</accession>
<sequence>MSESFAQLFEESLKVLETRQGSIVSGTVVAIQKGFVLVDAGLKSESAIPVAEFLNAQGELEIQVGDTVNVALDAVEDGFGETKLSREKAVRHESWIELEKAYEEKATVIGLIXGKVKGGFTVELNGVRAFLPGSLVDTRPAREADHLLGKELEFKVIKLDQKRNNVVVSRRAVIESENSQEREQVLENLVEGSEVKGVVKNLTEYGAFVDLGGVDGLLHITDMAWKRVKHPSEIVNVGDEVTVKVLKFDKDRTRVSLGLKQLGQDPWAAIAENHPVNSKLTGKVTNLTDYGCFVEILDGVEGLVHVSEMDWTNKNIHPSKVVSLGDTVEVMVLEIDEERRRISLGLKQCKANPWTQFADTHNKGDKVTGKIKSITDFGIFIGLEGGIDGLVHLSDISWSISGEEAVRQYKKGDEVSAVVLAVDAVKERISLGIKQLEEDPFNNFVAINKKGAVVSATVVEADAKGAKVELAGGVEGYIRSADLTSEVAVGDVVEAKYTGVDRKSRIVHLSVKAKDQAEEAAAVASVNNKQEDIVIPNAMAEAFKAAKGE</sequence>
<proteinExistence type="inferred from homology"/>
<reference key="1">
    <citation type="journal article" date="1995" name="Science">
        <title>Whole-genome random sequencing and assembly of Haemophilus influenzae Rd.</title>
        <authorList>
            <person name="Fleischmann R.D."/>
            <person name="Adams M.D."/>
            <person name="White O."/>
            <person name="Clayton R.A."/>
            <person name="Kirkness E.F."/>
            <person name="Kerlavage A.R."/>
            <person name="Bult C.J."/>
            <person name="Tomb J.-F."/>
            <person name="Dougherty B.A."/>
            <person name="Merrick J.M."/>
            <person name="McKenney K."/>
            <person name="Sutton G.G."/>
            <person name="FitzHugh W."/>
            <person name="Fields C.A."/>
            <person name="Gocayne J.D."/>
            <person name="Scott J.D."/>
            <person name="Shirley R."/>
            <person name="Liu L.-I."/>
            <person name="Glodek A."/>
            <person name="Kelley J.M."/>
            <person name="Weidman J.F."/>
            <person name="Phillips C.A."/>
            <person name="Spriggs T."/>
            <person name="Hedblom E."/>
            <person name="Cotton M.D."/>
            <person name="Utterback T.R."/>
            <person name="Hanna M.C."/>
            <person name="Nguyen D.T."/>
            <person name="Saudek D.M."/>
            <person name="Brandon R.C."/>
            <person name="Fine L.D."/>
            <person name="Fritchman J.L."/>
            <person name="Fuhrmann J.L."/>
            <person name="Geoghagen N.S.M."/>
            <person name="Gnehm C.L."/>
            <person name="McDonald L.A."/>
            <person name="Small K.V."/>
            <person name="Fraser C.M."/>
            <person name="Smith H.O."/>
            <person name="Venter J.C."/>
        </authorList>
    </citation>
    <scope>NUCLEOTIDE SEQUENCE [LARGE SCALE GENOMIC DNA]</scope>
    <source>
        <strain>ATCC 51907 / DSM 11121 / KW20 / Rd</strain>
    </source>
</reference>
<reference key="2">
    <citation type="submission" date="1996-09" db="EMBL/GenBank/DDBJ databases">
        <authorList>
            <person name="White O."/>
            <person name="Clayton R.A."/>
            <person name="Kerlavage A.R."/>
            <person name="Fleischmann R.D."/>
        </authorList>
    </citation>
    <scope>SEQUENCE REVISION</scope>
</reference>
<keyword id="KW-1185">Reference proteome</keyword>
<keyword id="KW-0677">Repeat</keyword>
<keyword id="KW-0687">Ribonucleoprotein</keyword>
<keyword id="KW-0689">Ribosomal protein</keyword>
<keyword id="KW-0694">RNA-binding</keyword>
<organism>
    <name type="scientific">Haemophilus influenzae (strain ATCC 51907 / DSM 11121 / KW20 / Rd)</name>
    <dbReference type="NCBI Taxonomy" id="71421"/>
    <lineage>
        <taxon>Bacteria</taxon>
        <taxon>Pseudomonadati</taxon>
        <taxon>Pseudomonadota</taxon>
        <taxon>Gammaproteobacteria</taxon>
        <taxon>Pasteurellales</taxon>
        <taxon>Pasteurellaceae</taxon>
        <taxon>Haemophilus</taxon>
    </lineage>
</organism>
<protein>
    <recommendedName>
        <fullName evidence="3">Small ribosomal subunit protein bS1</fullName>
    </recommendedName>
    <alternativeName>
        <fullName>30S ribosomal protein S1</fullName>
    </alternativeName>
</protein>